<sequence length="453" mass="47772">MHKVELPRAQKLAERAFANLERFLHIEAVSGIVLLIAAVAALIWANSPAADSYEALWHTPLTFGVGSHVYSQSLHFWINDGLMTIFFLVVGMEIRREIHEGALSSLRQATLPMAAAVGGVAVPALLYLSFGHASADQQGWAVPTATDIAFAVGVLALLGKSIPSNVRVFLLALAIIDDIIAVLIIAFFYSGGLDYTGFGVALIGLLMVIGLQKIGVGSAYAYVLPGAIVWLGILLTGAHPTLAGVVLGLMTPVTAMPMRERPLDAITRFTGELLGRAKAPEQDASDLMDPLKRLRLAQRELLPPVVRMQGTLHPWVAFGIMPVFALANAGVSLSGVDLSVEGPQWVMIAVAVALVAGKPLGIVSVSWLMVRLGWCVLPAEINWRSIVLVGLLAGIGFTMSIFIANLAFVDPGSLGAAKLGVLSASLIAAVLGLTWGVWSLRSTASATKAGSPT</sequence>
<evidence type="ECO:0000255" key="1">
    <source>
        <dbReference type="HAMAP-Rule" id="MF_01844"/>
    </source>
</evidence>
<proteinExistence type="inferred from homology"/>
<gene>
    <name evidence="1" type="primary">nhaA2</name>
    <name type="ordered locus">Pput_1868</name>
</gene>
<feature type="chain" id="PRO_0000334371" description="Na(+)/H(+) antiporter NhaA 2">
    <location>
        <begin position="1"/>
        <end position="453"/>
    </location>
</feature>
<feature type="transmembrane region" description="Helical" evidence="1">
    <location>
        <begin position="23"/>
        <end position="43"/>
    </location>
</feature>
<feature type="transmembrane region" description="Helical" evidence="1">
    <location>
        <begin position="74"/>
        <end position="94"/>
    </location>
</feature>
<feature type="transmembrane region" description="Helical" evidence="1">
    <location>
        <begin position="111"/>
        <end position="131"/>
    </location>
</feature>
<feature type="transmembrane region" description="Helical" evidence="1">
    <location>
        <begin position="139"/>
        <end position="159"/>
    </location>
</feature>
<feature type="transmembrane region" description="Helical" evidence="1">
    <location>
        <begin position="168"/>
        <end position="188"/>
    </location>
</feature>
<feature type="transmembrane region" description="Helical" evidence="1">
    <location>
        <begin position="191"/>
        <end position="211"/>
    </location>
</feature>
<feature type="transmembrane region" description="Helical" evidence="1">
    <location>
        <begin position="214"/>
        <end position="234"/>
    </location>
</feature>
<feature type="transmembrane region" description="Helical" evidence="1">
    <location>
        <begin position="235"/>
        <end position="255"/>
    </location>
</feature>
<feature type="transmembrane region" description="Helical" evidence="1">
    <location>
        <begin position="316"/>
        <end position="336"/>
    </location>
</feature>
<feature type="transmembrane region" description="Helical" evidence="1">
    <location>
        <begin position="345"/>
        <end position="365"/>
    </location>
</feature>
<feature type="transmembrane region" description="Helical" evidence="1">
    <location>
        <begin position="386"/>
        <end position="406"/>
    </location>
</feature>
<feature type="transmembrane region" description="Helical" evidence="1">
    <location>
        <begin position="419"/>
        <end position="439"/>
    </location>
</feature>
<reference key="1">
    <citation type="submission" date="2007-05" db="EMBL/GenBank/DDBJ databases">
        <title>Complete sequence of Pseudomonas putida F1.</title>
        <authorList>
            <consortium name="US DOE Joint Genome Institute"/>
            <person name="Copeland A."/>
            <person name="Lucas S."/>
            <person name="Lapidus A."/>
            <person name="Barry K."/>
            <person name="Detter J.C."/>
            <person name="Glavina del Rio T."/>
            <person name="Hammon N."/>
            <person name="Israni S."/>
            <person name="Dalin E."/>
            <person name="Tice H."/>
            <person name="Pitluck S."/>
            <person name="Chain P."/>
            <person name="Malfatti S."/>
            <person name="Shin M."/>
            <person name="Vergez L."/>
            <person name="Schmutz J."/>
            <person name="Larimer F."/>
            <person name="Land M."/>
            <person name="Hauser L."/>
            <person name="Kyrpides N."/>
            <person name="Lykidis A."/>
            <person name="Parales R."/>
            <person name="Richardson P."/>
        </authorList>
    </citation>
    <scope>NUCLEOTIDE SEQUENCE [LARGE SCALE GENOMIC DNA]</scope>
    <source>
        <strain>ATCC 700007 / DSM 6899 / JCM 31910 / BCRC 17059 / LMG 24140 / F1</strain>
    </source>
</reference>
<name>NHAA2_PSEP1</name>
<dbReference type="EMBL" id="CP000712">
    <property type="protein sequence ID" value="ABQ78017.1"/>
    <property type="molecule type" value="Genomic_DNA"/>
</dbReference>
<dbReference type="SMR" id="A5W1K7"/>
<dbReference type="KEGG" id="ppf:Pput_1868"/>
<dbReference type="eggNOG" id="COG3004">
    <property type="taxonomic scope" value="Bacteria"/>
</dbReference>
<dbReference type="HOGENOM" id="CLU_015803_1_2_6"/>
<dbReference type="GO" id="GO:0005886">
    <property type="term" value="C:plasma membrane"/>
    <property type="evidence" value="ECO:0007669"/>
    <property type="project" value="UniProtKB-SubCell"/>
</dbReference>
<dbReference type="GO" id="GO:0015385">
    <property type="term" value="F:sodium:proton antiporter activity"/>
    <property type="evidence" value="ECO:0007669"/>
    <property type="project" value="TreeGrafter"/>
</dbReference>
<dbReference type="GO" id="GO:0006885">
    <property type="term" value="P:regulation of pH"/>
    <property type="evidence" value="ECO:0007669"/>
    <property type="project" value="InterPro"/>
</dbReference>
<dbReference type="Gene3D" id="1.20.1530.10">
    <property type="entry name" value="Na+/H+ antiporter like domain"/>
    <property type="match status" value="1"/>
</dbReference>
<dbReference type="HAMAP" id="MF_01844">
    <property type="entry name" value="NhaA"/>
    <property type="match status" value="1"/>
</dbReference>
<dbReference type="InterPro" id="IPR023171">
    <property type="entry name" value="Na/H_antiporter_dom_sf"/>
</dbReference>
<dbReference type="InterPro" id="IPR004670">
    <property type="entry name" value="NhaA"/>
</dbReference>
<dbReference type="NCBIfam" id="TIGR00773">
    <property type="entry name" value="NhaA"/>
    <property type="match status" value="1"/>
</dbReference>
<dbReference type="PANTHER" id="PTHR30341:SF0">
    <property type="entry name" value="NA(+)_H(+) ANTIPORTER NHAA"/>
    <property type="match status" value="1"/>
</dbReference>
<dbReference type="PANTHER" id="PTHR30341">
    <property type="entry name" value="SODIUM ION/PROTON ANTIPORTER NHAA-RELATED"/>
    <property type="match status" value="1"/>
</dbReference>
<dbReference type="Pfam" id="PF06965">
    <property type="entry name" value="Na_H_antiport_1"/>
    <property type="match status" value="1"/>
</dbReference>
<comment type="function">
    <text evidence="1">Na(+)/H(+) antiporter that extrudes sodium in exchange for external protons.</text>
</comment>
<comment type="catalytic activity">
    <reaction evidence="1">
        <text>Na(+)(in) + 2 H(+)(out) = Na(+)(out) + 2 H(+)(in)</text>
        <dbReference type="Rhea" id="RHEA:29251"/>
        <dbReference type="ChEBI" id="CHEBI:15378"/>
        <dbReference type="ChEBI" id="CHEBI:29101"/>
    </reaction>
    <physiologicalReaction direction="left-to-right" evidence="1">
        <dbReference type="Rhea" id="RHEA:29252"/>
    </physiologicalReaction>
</comment>
<comment type="subcellular location">
    <subcellularLocation>
        <location evidence="1">Cell inner membrane</location>
        <topology evidence="1">Multi-pass membrane protein</topology>
    </subcellularLocation>
</comment>
<comment type="similarity">
    <text evidence="1">Belongs to the NhaA Na(+)/H(+) (TC 2.A.33) antiporter family.</text>
</comment>
<organism>
    <name type="scientific">Pseudomonas putida (strain ATCC 700007 / DSM 6899 / JCM 31910 / BCRC 17059 / LMG 24140 / F1)</name>
    <dbReference type="NCBI Taxonomy" id="351746"/>
    <lineage>
        <taxon>Bacteria</taxon>
        <taxon>Pseudomonadati</taxon>
        <taxon>Pseudomonadota</taxon>
        <taxon>Gammaproteobacteria</taxon>
        <taxon>Pseudomonadales</taxon>
        <taxon>Pseudomonadaceae</taxon>
        <taxon>Pseudomonas</taxon>
    </lineage>
</organism>
<keyword id="KW-0050">Antiport</keyword>
<keyword id="KW-0997">Cell inner membrane</keyword>
<keyword id="KW-1003">Cell membrane</keyword>
<keyword id="KW-0406">Ion transport</keyword>
<keyword id="KW-0472">Membrane</keyword>
<keyword id="KW-0915">Sodium</keyword>
<keyword id="KW-0739">Sodium transport</keyword>
<keyword id="KW-0812">Transmembrane</keyword>
<keyword id="KW-1133">Transmembrane helix</keyword>
<keyword id="KW-0813">Transport</keyword>
<protein>
    <recommendedName>
        <fullName evidence="1">Na(+)/H(+) antiporter NhaA 2</fullName>
    </recommendedName>
    <alternativeName>
        <fullName evidence="1">Sodium/proton antiporter NhaA 2</fullName>
    </alternativeName>
</protein>
<accession>A5W1K7</accession>